<protein>
    <recommendedName>
        <fullName>ATP synthase subunit a</fullName>
    </recommendedName>
    <alternativeName>
        <fullName>F-ATPase protein 6</fullName>
    </alternativeName>
</protein>
<sequence length="224" mass="25161">MMTNLFSVFDPSAIFNFSLNWLSTFLGLLMIPSIYWLMPSRYNIMWNSILLTLHKEFKTLLGPSGHNGSTFIFISLFSLILFNNFMGLFPYIFTSTSHLTLTLSLALPLWLCFMLYGWINHTQHMFAHLVPQGTPAILMPFMVCIETISNIIRPGTLAVRLTANMIAGHLLLTLLGNTGPSMSYILVTFLLMAQIALLVLESAVAMIQSYVFAVLSTLYSSEVN</sequence>
<accession>P00850</accession>
<accession>B2L9S2</accession>
<accession>Q9MGN5</accession>
<accession>Q9MGP0</accession>
<accession>Q9MJC8</accession>
<name>ATP6_DROME</name>
<organism>
    <name type="scientific">Drosophila melanogaster</name>
    <name type="common">Fruit fly</name>
    <dbReference type="NCBI Taxonomy" id="7227"/>
    <lineage>
        <taxon>Eukaryota</taxon>
        <taxon>Metazoa</taxon>
        <taxon>Ecdysozoa</taxon>
        <taxon>Arthropoda</taxon>
        <taxon>Hexapoda</taxon>
        <taxon>Insecta</taxon>
        <taxon>Pterygota</taxon>
        <taxon>Neoptera</taxon>
        <taxon>Endopterygota</taxon>
        <taxon>Diptera</taxon>
        <taxon>Brachycera</taxon>
        <taxon>Muscomorpha</taxon>
        <taxon>Ephydroidea</taxon>
        <taxon>Drosophilidae</taxon>
        <taxon>Drosophila</taxon>
        <taxon>Sophophora</taxon>
    </lineage>
</organism>
<reference key="1">
    <citation type="journal article" date="1983" name="Nature">
        <title>Drosophila melanogaster mitochondrial DNA, a novel organization and genetic code.</title>
        <authorList>
            <person name="de Bruijn M.H.L."/>
        </authorList>
    </citation>
    <scope>NUCLEOTIDE SEQUENCE [GENOMIC DNA]</scope>
    <source>
        <strain>Oregon-R</strain>
        <tissue>Embryo</tissue>
    </source>
</reference>
<reference key="2">
    <citation type="submission" date="1999-11" db="EMBL/GenBank/DDBJ databases">
        <authorList>
            <person name="Ballard J.W.O."/>
        </authorList>
    </citation>
    <scope>NUCLEOTIDE SEQUENCE [GENOMIC DNA]</scope>
    <source>
        <strain>Oregon-R</strain>
        <strain>Zimbabwe 53</strain>
    </source>
</reference>
<reference key="3">
    <citation type="journal article" date="2001" name="Heredity">
        <title>I-R system of hybrid dysgenesis in Drosophila melanogaster: analysis of the mitochondrial DNA in reactive strains exhibiting different potentials for I factor transposition.</title>
        <authorList>
            <person name="Azou Y."/>
            <person name="Bregliano J.C."/>
        </authorList>
    </citation>
    <scope>NUCLEOTIDE SEQUENCE [GENOMIC DNA]</scope>
    <source>
        <strain>Paris</strain>
    </source>
</reference>
<reference key="4">
    <citation type="journal article" date="1995" name="Insect Mol. Biol.">
        <title>Drosophila melanogaster mitochondrial DNA: completion of the nucleotide sequence and evolutionary comparisons.</title>
        <authorList>
            <person name="Lewis D.L."/>
            <person name="Farr C.L."/>
            <person name="Kaguni L.S."/>
        </authorList>
    </citation>
    <scope>NUCLEOTIDE SEQUENCE [LARGE SCALE GENOMIC DNA]</scope>
</reference>
<reference key="5">
    <citation type="submission" date="2014-08" db="EMBL/GenBank/DDBJ databases">
        <authorList>
            <person name="Wan K."/>
            <person name="Celniker S."/>
        </authorList>
    </citation>
    <scope>NUCLEOTIDE SEQUENCE [LARGE SCALE GENOMIC DNA]</scope>
    <source>
        <strain>Berkeley</strain>
    </source>
</reference>
<reference key="6">
    <citation type="journal article" date="2008" name="Biol. Lett.">
        <title>Out of Hawaii: the origin and biogeography of the genus Scaptomyza (Diptera: Drosophilidae).</title>
        <authorList>
            <person name="O'Grady P.M."/>
            <person name="DeSalle R."/>
        </authorList>
    </citation>
    <scope>NUCLEOTIDE SEQUENCE [GENOMIC DNA] OF 1-130</scope>
</reference>
<keyword id="KW-0066">ATP synthesis</keyword>
<keyword id="KW-0138">CF(0)</keyword>
<keyword id="KW-0375">Hydrogen ion transport</keyword>
<keyword id="KW-0406">Ion transport</keyword>
<keyword id="KW-0472">Membrane</keyword>
<keyword id="KW-0496">Mitochondrion</keyword>
<keyword id="KW-0999">Mitochondrion inner membrane</keyword>
<keyword id="KW-1185">Reference proteome</keyword>
<keyword id="KW-0812">Transmembrane</keyword>
<keyword id="KW-1133">Transmembrane helix</keyword>
<keyword id="KW-0813">Transport</keyword>
<geneLocation type="mitochondrion"/>
<feature type="chain" id="PRO_0000082116" description="ATP synthase subunit a">
    <location>
        <begin position="1"/>
        <end position="224"/>
    </location>
</feature>
<feature type="transmembrane region" description="Helical" evidence="1">
    <location>
        <begin position="17"/>
        <end position="37"/>
    </location>
</feature>
<feature type="transmembrane region" description="Helical" evidence="1">
    <location>
        <begin position="72"/>
        <end position="92"/>
    </location>
</feature>
<feature type="transmembrane region" description="Helical" evidence="1">
    <location>
        <begin position="99"/>
        <end position="119"/>
    </location>
</feature>
<feature type="transmembrane region" description="Helical" evidence="1">
    <location>
        <begin position="125"/>
        <end position="145"/>
    </location>
</feature>
<feature type="transmembrane region" description="Helical" evidence="1">
    <location>
        <begin position="166"/>
        <end position="186"/>
    </location>
</feature>
<feature type="transmembrane region" description="Helical" evidence="1">
    <location>
        <begin position="187"/>
        <end position="207"/>
    </location>
</feature>
<feature type="sequence conflict" description="In Ref. 1; AAB59242 and 4; AAC47815." evidence="2" ref="1 4">
    <original>S</original>
    <variation>L</variation>
    <location>
        <position position="12"/>
    </location>
</feature>
<feature type="sequence conflict" description="In Ref. 2; AAF77230." evidence="2" ref="2">
    <original>N</original>
    <variation>K</variation>
    <location>
        <position position="177"/>
    </location>
</feature>
<feature type="sequence conflict" description="In Ref. 1; AAB59242, 2; AAF77230 and 4; AAC47815." evidence="2" ref="1 2 4">
    <original>P</original>
    <variation>S</variation>
    <location>
        <position position="180"/>
    </location>
</feature>
<feature type="sequence conflict" description="In Ref. 1; AAB59242, 2; AAF77230, 3; CAB91055 and 4; AAC47815." evidence="2" ref="1 2 3 4">
    <original>I</original>
    <variation>M</variation>
    <location>
        <position position="185"/>
    </location>
</feature>
<feature type="sequence conflict" description="In Ref. 1; AAB59242, 2; AAF77230 and 4; AAC47815." evidence="2" ref="1 2 4">
    <original>V</original>
    <variation>M</variation>
    <location>
        <position position="187"/>
    </location>
</feature>
<evidence type="ECO:0000255" key="1"/>
<evidence type="ECO:0000305" key="2"/>
<gene>
    <name type="primary">mt:ATPase6</name>
    <name type="synonym">ATP6</name>
    <name type="synonym">ATPase6</name>
</gene>
<proteinExistence type="inferred from homology"/>
<comment type="function">
    <text>Mitochondrial membrane ATP synthase (F(1)F(0) ATP synthase or Complex V) produces ATP from ADP in the presence of a proton gradient across the membrane which is generated by electron transport complexes of the respiratory chain. F-type ATPases consist of two structural domains, F(1) - containing the extramembraneous catalytic core and F(0) - containing the membrane proton channel, linked together by a central stalk and a peripheral stalk. During catalysis, ATP synthesis in the catalytic domain of F(1) is coupled via a rotary mechanism of the central stalk subunits to proton translocation. Key component of the proton channel; it may play a direct role in the translocation of protons across the membrane.</text>
</comment>
<comment type="subunit">
    <text>F-type ATPases have 2 components, CF(1) - the catalytic core - and CF(0) - the membrane proton channel. CF(1) has five subunits: alpha(3), beta(3), gamma(1), delta(1), epsilon(1). CF(0) has three main subunits: a, b and c.</text>
</comment>
<comment type="subcellular location">
    <subcellularLocation>
        <location>Mitochondrion inner membrane</location>
        <topology>Multi-pass membrane protein</topology>
    </subcellularLocation>
</comment>
<comment type="similarity">
    <text evidence="2">Belongs to the ATPase A chain family.</text>
</comment>
<dbReference type="EMBL" id="J01404">
    <property type="protein sequence ID" value="AAB59242.1"/>
    <property type="molecule type" value="Genomic_DNA"/>
</dbReference>
<dbReference type="EMBL" id="AF200828">
    <property type="protein sequence ID" value="AAF77230.1"/>
    <property type="molecule type" value="Genomic_DNA"/>
</dbReference>
<dbReference type="EMBL" id="AF200829">
    <property type="protein sequence ID" value="AAF77242.1"/>
    <property type="molecule type" value="Genomic_DNA"/>
</dbReference>
<dbReference type="EMBL" id="AJ400907">
    <property type="protein sequence ID" value="CAB91055.1"/>
    <property type="molecule type" value="Genomic_DNA"/>
</dbReference>
<dbReference type="EMBL" id="U37541">
    <property type="protein sequence ID" value="AAC47815.1"/>
    <property type="molecule type" value="Genomic_DNA"/>
</dbReference>
<dbReference type="EMBL" id="KJ947872">
    <property type="protein sequence ID" value="AIC64008.1"/>
    <property type="molecule type" value="Genomic_DNA"/>
</dbReference>
<dbReference type="EMBL" id="EU493757">
    <property type="protein sequence ID" value="ACC94834.1"/>
    <property type="molecule type" value="Genomic_DNA"/>
</dbReference>
<dbReference type="PIR" id="A01053">
    <property type="entry name" value="PWFF6"/>
</dbReference>
<dbReference type="RefSeq" id="YP_009047270.1">
    <property type="nucleotide sequence ID" value="NC_024511.2"/>
</dbReference>
<dbReference type="SMR" id="P00850"/>
<dbReference type="BioGRID" id="2595068">
    <property type="interactions" value="1"/>
</dbReference>
<dbReference type="ComplexPortal" id="CPX-8618">
    <property type="entry name" value="Mitochondrial proton-transporting ATP synthase complex"/>
</dbReference>
<dbReference type="ComplexPortal" id="CPX-8619">
    <property type="entry name" value="Mitochondrial proton-transporting ATP synthase complex, testis-specific variant"/>
</dbReference>
<dbReference type="FunCoup" id="P00850">
    <property type="interactions" value="156"/>
</dbReference>
<dbReference type="STRING" id="7227.FBpp0390630"/>
<dbReference type="GlyGen" id="P00850">
    <property type="glycosylation" value="1 site"/>
</dbReference>
<dbReference type="PaxDb" id="7227-FBpp0100179"/>
<dbReference type="EnsemblMetazoa" id="FBtr0433498">
    <property type="protein sequence ID" value="FBpp0390630"/>
    <property type="gene ID" value="FBgn0013672"/>
</dbReference>
<dbReference type="GeneID" id="19893539"/>
<dbReference type="KEGG" id="dme:Dmel_CG34073"/>
<dbReference type="AGR" id="FB:FBgn0013672"/>
<dbReference type="CTD" id="4508"/>
<dbReference type="FlyBase" id="FBgn0013672">
    <property type="gene designation" value="mt:ATPase6"/>
</dbReference>
<dbReference type="VEuPathDB" id="VectorBase:FBgn0013672"/>
<dbReference type="eggNOG" id="KOG4665">
    <property type="taxonomic scope" value="Eukaryota"/>
</dbReference>
<dbReference type="GeneTree" id="ENSGT00390000005568"/>
<dbReference type="HOGENOM" id="CLU_041018_0_2_1"/>
<dbReference type="InParanoid" id="P00850"/>
<dbReference type="OMA" id="FFDQFMS"/>
<dbReference type="OrthoDB" id="10068504at2759"/>
<dbReference type="PhylomeDB" id="P00850"/>
<dbReference type="Reactome" id="R-DME-163210">
    <property type="pathway name" value="Formation of ATP by chemiosmotic coupling"/>
</dbReference>
<dbReference type="Reactome" id="R-DME-8949613">
    <property type="pathway name" value="Cristae formation"/>
</dbReference>
<dbReference type="Reactome" id="R-DME-9837999">
    <property type="pathway name" value="Mitochondrial protein degradation"/>
</dbReference>
<dbReference type="BioGRID-ORCS" id="19893539">
    <property type="hits" value="0 hits in 3 CRISPR screens"/>
</dbReference>
<dbReference type="GenomeRNAi" id="19893539"/>
<dbReference type="PRO" id="PR:P00850"/>
<dbReference type="Proteomes" id="UP000000803">
    <property type="component" value="Mitochondrion"/>
</dbReference>
<dbReference type="Bgee" id="FBgn0013672">
    <property type="expression patterns" value="Expressed in lamina monopolar neuron L1 (Drosophila) in brain and 281 other cell types or tissues"/>
</dbReference>
<dbReference type="ExpressionAtlas" id="P00850">
    <property type="expression patterns" value="baseline and differential"/>
</dbReference>
<dbReference type="GO" id="GO:0005743">
    <property type="term" value="C:mitochondrial inner membrane"/>
    <property type="evidence" value="ECO:0000250"/>
    <property type="project" value="FlyBase"/>
</dbReference>
<dbReference type="GO" id="GO:0005739">
    <property type="term" value="C:mitochondrion"/>
    <property type="evidence" value="ECO:0000315"/>
    <property type="project" value="FlyBase"/>
</dbReference>
<dbReference type="GO" id="GO:0045259">
    <property type="term" value="C:proton-transporting ATP synthase complex"/>
    <property type="evidence" value="ECO:0000250"/>
    <property type="project" value="FlyBase"/>
</dbReference>
<dbReference type="GO" id="GO:0015078">
    <property type="term" value="F:proton transmembrane transporter activity"/>
    <property type="evidence" value="ECO:0007669"/>
    <property type="project" value="InterPro"/>
</dbReference>
<dbReference type="GO" id="GO:0008340">
    <property type="term" value="P:determination of adult lifespan"/>
    <property type="evidence" value="ECO:0000315"/>
    <property type="project" value="FlyBase"/>
</dbReference>
<dbReference type="GO" id="GO:0040011">
    <property type="term" value="P:locomotion"/>
    <property type="evidence" value="ECO:0000315"/>
    <property type="project" value="FlyBase"/>
</dbReference>
<dbReference type="GO" id="GO:0046716">
    <property type="term" value="P:muscle cell cellular homeostasis"/>
    <property type="evidence" value="ECO:0000315"/>
    <property type="project" value="FlyBase"/>
</dbReference>
<dbReference type="GO" id="GO:0070050">
    <property type="term" value="P:neuron cellular homeostasis"/>
    <property type="evidence" value="ECO:0000315"/>
    <property type="project" value="FlyBase"/>
</dbReference>
<dbReference type="GO" id="GO:0015986">
    <property type="term" value="P:proton motive force-driven ATP synthesis"/>
    <property type="evidence" value="ECO:0000250"/>
    <property type="project" value="FlyBase"/>
</dbReference>
<dbReference type="CDD" id="cd00310">
    <property type="entry name" value="ATP-synt_Fo_a_6"/>
    <property type="match status" value="1"/>
</dbReference>
<dbReference type="FunFam" id="1.20.120.220:FF:000008">
    <property type="entry name" value="ATP synthase subunit a"/>
    <property type="match status" value="1"/>
</dbReference>
<dbReference type="Gene3D" id="1.20.120.220">
    <property type="entry name" value="ATP synthase, F0 complex, subunit A"/>
    <property type="match status" value="1"/>
</dbReference>
<dbReference type="InterPro" id="IPR000568">
    <property type="entry name" value="ATP_synth_F0_asu"/>
</dbReference>
<dbReference type="InterPro" id="IPR023011">
    <property type="entry name" value="ATP_synth_F0_asu_AS"/>
</dbReference>
<dbReference type="InterPro" id="IPR045083">
    <property type="entry name" value="ATP_synth_F0_asu_bact/mt"/>
</dbReference>
<dbReference type="InterPro" id="IPR035908">
    <property type="entry name" value="F0_ATP_A_sf"/>
</dbReference>
<dbReference type="NCBIfam" id="TIGR01131">
    <property type="entry name" value="ATP_synt_6_or_A"/>
    <property type="match status" value="1"/>
</dbReference>
<dbReference type="PANTHER" id="PTHR11410">
    <property type="entry name" value="ATP SYNTHASE SUBUNIT A"/>
    <property type="match status" value="1"/>
</dbReference>
<dbReference type="PANTHER" id="PTHR11410:SF0">
    <property type="entry name" value="ATP SYNTHASE SUBUNIT A"/>
    <property type="match status" value="1"/>
</dbReference>
<dbReference type="Pfam" id="PF00119">
    <property type="entry name" value="ATP-synt_A"/>
    <property type="match status" value="1"/>
</dbReference>
<dbReference type="PRINTS" id="PR00123">
    <property type="entry name" value="ATPASEA"/>
</dbReference>
<dbReference type="SUPFAM" id="SSF81336">
    <property type="entry name" value="F1F0 ATP synthase subunit A"/>
    <property type="match status" value="1"/>
</dbReference>
<dbReference type="PROSITE" id="PS00449">
    <property type="entry name" value="ATPASE_A"/>
    <property type="match status" value="1"/>
</dbReference>